<accession>A8AJD6</accession>
<evidence type="ECO:0000255" key="1">
    <source>
        <dbReference type="HAMAP-Rule" id="MF_00126"/>
    </source>
</evidence>
<protein>
    <recommendedName>
        <fullName evidence="1">Glutamine--tRNA ligase</fullName>
        <ecNumber evidence="1">6.1.1.18</ecNumber>
    </recommendedName>
    <alternativeName>
        <fullName evidence="1">Glutaminyl-tRNA synthetase</fullName>
        <shortName evidence="1">GlnRS</shortName>
    </alternativeName>
</protein>
<reference key="1">
    <citation type="submission" date="2007-08" db="EMBL/GenBank/DDBJ databases">
        <authorList>
            <consortium name="The Citrobacter koseri Genome Sequencing Project"/>
            <person name="McClelland M."/>
            <person name="Sanderson E.K."/>
            <person name="Porwollik S."/>
            <person name="Spieth J."/>
            <person name="Clifton W.S."/>
            <person name="Latreille P."/>
            <person name="Courtney L."/>
            <person name="Wang C."/>
            <person name="Pepin K."/>
            <person name="Bhonagiri V."/>
            <person name="Nash W."/>
            <person name="Johnson M."/>
            <person name="Thiruvilangam P."/>
            <person name="Wilson R."/>
        </authorList>
    </citation>
    <scope>NUCLEOTIDE SEQUENCE [LARGE SCALE GENOMIC DNA]</scope>
    <source>
        <strain>ATCC BAA-895 / CDC 4225-83 / SGSC4696</strain>
    </source>
</reference>
<name>SYQ_CITK8</name>
<organism>
    <name type="scientific">Citrobacter koseri (strain ATCC BAA-895 / CDC 4225-83 / SGSC4696)</name>
    <dbReference type="NCBI Taxonomy" id="290338"/>
    <lineage>
        <taxon>Bacteria</taxon>
        <taxon>Pseudomonadati</taxon>
        <taxon>Pseudomonadota</taxon>
        <taxon>Gammaproteobacteria</taxon>
        <taxon>Enterobacterales</taxon>
        <taxon>Enterobacteriaceae</taxon>
        <taxon>Citrobacter</taxon>
    </lineage>
</organism>
<dbReference type="EC" id="6.1.1.18" evidence="1"/>
<dbReference type="EMBL" id="CP000822">
    <property type="protein sequence ID" value="ABV13599.1"/>
    <property type="molecule type" value="Genomic_DNA"/>
</dbReference>
<dbReference type="RefSeq" id="WP_012133322.1">
    <property type="nucleotide sequence ID" value="NC_009792.1"/>
</dbReference>
<dbReference type="SMR" id="A8AJD6"/>
<dbReference type="STRING" id="290338.CKO_02482"/>
<dbReference type="GeneID" id="45136365"/>
<dbReference type="KEGG" id="cko:CKO_02482"/>
<dbReference type="HOGENOM" id="CLU_001882_2_3_6"/>
<dbReference type="OrthoDB" id="9801560at2"/>
<dbReference type="Proteomes" id="UP000008148">
    <property type="component" value="Chromosome"/>
</dbReference>
<dbReference type="GO" id="GO:0005829">
    <property type="term" value="C:cytosol"/>
    <property type="evidence" value="ECO:0007669"/>
    <property type="project" value="TreeGrafter"/>
</dbReference>
<dbReference type="GO" id="GO:0005524">
    <property type="term" value="F:ATP binding"/>
    <property type="evidence" value="ECO:0007669"/>
    <property type="project" value="UniProtKB-UniRule"/>
</dbReference>
<dbReference type="GO" id="GO:0004819">
    <property type="term" value="F:glutamine-tRNA ligase activity"/>
    <property type="evidence" value="ECO:0007669"/>
    <property type="project" value="UniProtKB-UniRule"/>
</dbReference>
<dbReference type="GO" id="GO:0006425">
    <property type="term" value="P:glutaminyl-tRNA aminoacylation"/>
    <property type="evidence" value="ECO:0007669"/>
    <property type="project" value="InterPro"/>
</dbReference>
<dbReference type="GO" id="GO:0006424">
    <property type="term" value="P:glutamyl-tRNA aminoacylation"/>
    <property type="evidence" value="ECO:0007669"/>
    <property type="project" value="UniProtKB-UniRule"/>
</dbReference>
<dbReference type="CDD" id="cd00807">
    <property type="entry name" value="GlnRS_core"/>
    <property type="match status" value="1"/>
</dbReference>
<dbReference type="FunFam" id="1.10.1160.10:FF:000001">
    <property type="entry name" value="Glutamine--tRNA ligase"/>
    <property type="match status" value="1"/>
</dbReference>
<dbReference type="FunFam" id="2.40.240.10:FF:000001">
    <property type="entry name" value="Glutamine--tRNA ligase"/>
    <property type="match status" value="1"/>
</dbReference>
<dbReference type="FunFam" id="2.40.240.10:FF:000003">
    <property type="entry name" value="Glutamine--tRNA ligase"/>
    <property type="match status" value="1"/>
</dbReference>
<dbReference type="FunFam" id="3.90.800.10:FF:000001">
    <property type="entry name" value="Glutamine--tRNA ligase"/>
    <property type="match status" value="1"/>
</dbReference>
<dbReference type="FunFam" id="3.40.50.620:FF:000037">
    <property type="entry name" value="Glutamine--tRNA ligase cytoplasmic"/>
    <property type="match status" value="1"/>
</dbReference>
<dbReference type="Gene3D" id="1.10.1160.10">
    <property type="entry name" value="Glutamyl-trna Synthetase, Domain 2"/>
    <property type="match status" value="1"/>
</dbReference>
<dbReference type="Gene3D" id="3.90.800.10">
    <property type="entry name" value="Glutamyl-tRNA Synthetase, Domain 3"/>
    <property type="match status" value="1"/>
</dbReference>
<dbReference type="Gene3D" id="3.40.50.620">
    <property type="entry name" value="HUPs"/>
    <property type="match status" value="1"/>
</dbReference>
<dbReference type="Gene3D" id="2.40.240.10">
    <property type="entry name" value="Ribosomal Protein L25, Chain P"/>
    <property type="match status" value="2"/>
</dbReference>
<dbReference type="HAMAP" id="MF_00126">
    <property type="entry name" value="Gln_tRNA_synth"/>
    <property type="match status" value="1"/>
</dbReference>
<dbReference type="InterPro" id="IPR001412">
    <property type="entry name" value="aa-tRNA-synth_I_CS"/>
</dbReference>
<dbReference type="InterPro" id="IPR004514">
    <property type="entry name" value="Gln-tRNA-synth"/>
</dbReference>
<dbReference type="InterPro" id="IPR050132">
    <property type="entry name" value="Gln/Glu-tRNA_Ligase"/>
</dbReference>
<dbReference type="InterPro" id="IPR022861">
    <property type="entry name" value="Gln_tRNA_ligase_bac"/>
</dbReference>
<dbReference type="InterPro" id="IPR000924">
    <property type="entry name" value="Glu/Gln-tRNA-synth"/>
</dbReference>
<dbReference type="InterPro" id="IPR020058">
    <property type="entry name" value="Glu/Gln-tRNA-synth_Ib_cat-dom"/>
</dbReference>
<dbReference type="InterPro" id="IPR020059">
    <property type="entry name" value="Glu/Gln-tRNA-synth_Ib_codon-bd"/>
</dbReference>
<dbReference type="InterPro" id="IPR020061">
    <property type="entry name" value="Glu_tRNA_lig_a-bdl"/>
</dbReference>
<dbReference type="InterPro" id="IPR020056">
    <property type="entry name" value="Rbsml_bL25/Gln-tRNA_synth_N"/>
</dbReference>
<dbReference type="InterPro" id="IPR011035">
    <property type="entry name" value="Ribosomal_bL25/Gln-tRNA_synth"/>
</dbReference>
<dbReference type="InterPro" id="IPR014729">
    <property type="entry name" value="Rossmann-like_a/b/a_fold"/>
</dbReference>
<dbReference type="InterPro" id="IPR049437">
    <property type="entry name" value="tRNA-synt_1c_C2"/>
</dbReference>
<dbReference type="NCBIfam" id="TIGR00440">
    <property type="entry name" value="glnS"/>
    <property type="match status" value="1"/>
</dbReference>
<dbReference type="NCBIfam" id="NF011291">
    <property type="entry name" value="PRK14703.1"/>
    <property type="match status" value="1"/>
</dbReference>
<dbReference type="PANTHER" id="PTHR43097:SF5">
    <property type="entry name" value="GLUTAMATE--TRNA LIGASE"/>
    <property type="match status" value="1"/>
</dbReference>
<dbReference type="PANTHER" id="PTHR43097">
    <property type="entry name" value="GLUTAMINE-TRNA LIGASE"/>
    <property type="match status" value="1"/>
</dbReference>
<dbReference type="Pfam" id="PF00749">
    <property type="entry name" value="tRNA-synt_1c"/>
    <property type="match status" value="1"/>
</dbReference>
<dbReference type="Pfam" id="PF03950">
    <property type="entry name" value="tRNA-synt_1c_C"/>
    <property type="match status" value="1"/>
</dbReference>
<dbReference type="Pfam" id="PF20974">
    <property type="entry name" value="tRNA-synt_1c_C2"/>
    <property type="match status" value="1"/>
</dbReference>
<dbReference type="PRINTS" id="PR00987">
    <property type="entry name" value="TRNASYNTHGLU"/>
</dbReference>
<dbReference type="SUPFAM" id="SSF52374">
    <property type="entry name" value="Nucleotidylyl transferase"/>
    <property type="match status" value="1"/>
</dbReference>
<dbReference type="SUPFAM" id="SSF50715">
    <property type="entry name" value="Ribosomal protein L25-like"/>
    <property type="match status" value="1"/>
</dbReference>
<dbReference type="PROSITE" id="PS00178">
    <property type="entry name" value="AA_TRNA_LIGASE_I"/>
    <property type="match status" value="1"/>
</dbReference>
<sequence length="555" mass="63629">MSEAEARPTNFIRQIIDEDLASGKHTTIHTRFPPEPNGYLHIGHAKSICLNFGIAQDYQGLCNLRFDDTNPVKEDIEYVDSIKNDVEWLGFHWAGNVCYSSDYFDQLHAYAVELITKGLAYVDELTPDQIREYRGTLKEPGKNSPFRDRSVEENLALFEKMRTGGFEEGKACLRAKIDMASPFIVMRDPVLYRIKFAEHHQTGNKWCIYPMYDFTHCISDALEGITHSLCTLEFQDNRRLYDWVLDNITIPVHPRQYEFSRLNLEYTVMSKRKLNLLVTDKHVEGWDDPRMPTISGLRRRGYTAASIREFCKRIGVTKQDNTIEMASLESCIREDLNENAPRAMAVIDPVKLVIENYPQGESEMVTMPNHPNKPEMGSREVPFSGEIWIDRADFREEANKQYKRLVMGKEVRLRNAYVVKAERVEKDAEGNITTIFCTYDADTLSKDPADGRKVKGVIHWVSAAHALPVEIRLYDRLFSVPNPGAAEDFLSVINPESLVIKQGYAEPSLQNAVAGKAYQFEREGYFCLDSRYTTADKRVFNRTVGLRDTWAKAGE</sequence>
<proteinExistence type="inferred from homology"/>
<keyword id="KW-0030">Aminoacyl-tRNA synthetase</keyword>
<keyword id="KW-0067">ATP-binding</keyword>
<keyword id="KW-0963">Cytoplasm</keyword>
<keyword id="KW-0436">Ligase</keyword>
<keyword id="KW-0547">Nucleotide-binding</keyword>
<keyword id="KW-0648">Protein biosynthesis</keyword>
<keyword id="KW-1185">Reference proteome</keyword>
<feature type="chain" id="PRO_1000016292" description="Glutamine--tRNA ligase">
    <location>
        <begin position="1"/>
        <end position="555"/>
    </location>
</feature>
<feature type="region of interest" description="Interaction with tRNA" evidence="1">
    <location>
        <begin position="317"/>
        <end position="324"/>
    </location>
</feature>
<feature type="short sequence motif" description="'HIGH' region" evidence="1">
    <location>
        <begin position="34"/>
        <end position="44"/>
    </location>
</feature>
<feature type="short sequence motif" description="'KMSKS' region" evidence="1">
    <location>
        <begin position="268"/>
        <end position="272"/>
    </location>
</feature>
<feature type="binding site" evidence="1">
    <location>
        <begin position="35"/>
        <end position="37"/>
    </location>
    <ligand>
        <name>ATP</name>
        <dbReference type="ChEBI" id="CHEBI:30616"/>
    </ligand>
</feature>
<feature type="binding site" evidence="1">
    <location>
        <begin position="41"/>
        <end position="47"/>
    </location>
    <ligand>
        <name>ATP</name>
        <dbReference type="ChEBI" id="CHEBI:30616"/>
    </ligand>
</feature>
<feature type="binding site" evidence="1">
    <location>
        <position position="67"/>
    </location>
    <ligand>
        <name>L-glutamine</name>
        <dbReference type="ChEBI" id="CHEBI:58359"/>
    </ligand>
</feature>
<feature type="binding site" evidence="1">
    <location>
        <position position="212"/>
    </location>
    <ligand>
        <name>L-glutamine</name>
        <dbReference type="ChEBI" id="CHEBI:58359"/>
    </ligand>
</feature>
<feature type="binding site" evidence="1">
    <location>
        <position position="231"/>
    </location>
    <ligand>
        <name>ATP</name>
        <dbReference type="ChEBI" id="CHEBI:30616"/>
    </ligand>
</feature>
<feature type="binding site" evidence="1">
    <location>
        <begin position="261"/>
        <end position="262"/>
    </location>
    <ligand>
        <name>ATP</name>
        <dbReference type="ChEBI" id="CHEBI:30616"/>
    </ligand>
</feature>
<feature type="binding site" evidence="1">
    <location>
        <begin position="269"/>
        <end position="271"/>
    </location>
    <ligand>
        <name>ATP</name>
        <dbReference type="ChEBI" id="CHEBI:30616"/>
    </ligand>
</feature>
<comment type="catalytic activity">
    <reaction evidence="1">
        <text>tRNA(Gln) + L-glutamine + ATP = L-glutaminyl-tRNA(Gln) + AMP + diphosphate</text>
        <dbReference type="Rhea" id="RHEA:20121"/>
        <dbReference type="Rhea" id="RHEA-COMP:9662"/>
        <dbReference type="Rhea" id="RHEA-COMP:9681"/>
        <dbReference type="ChEBI" id="CHEBI:30616"/>
        <dbReference type="ChEBI" id="CHEBI:33019"/>
        <dbReference type="ChEBI" id="CHEBI:58359"/>
        <dbReference type="ChEBI" id="CHEBI:78442"/>
        <dbReference type="ChEBI" id="CHEBI:78521"/>
        <dbReference type="ChEBI" id="CHEBI:456215"/>
        <dbReference type="EC" id="6.1.1.18"/>
    </reaction>
</comment>
<comment type="subunit">
    <text evidence="1">Monomer.</text>
</comment>
<comment type="subcellular location">
    <subcellularLocation>
        <location evidence="1">Cytoplasm</location>
    </subcellularLocation>
</comment>
<comment type="similarity">
    <text evidence="1">Belongs to the class-I aminoacyl-tRNA synthetase family.</text>
</comment>
<gene>
    <name evidence="1" type="primary">glnS</name>
    <name type="ordered locus">CKO_02482</name>
</gene>